<evidence type="ECO:0000255" key="1">
    <source>
        <dbReference type="HAMAP-Rule" id="MF_00168"/>
    </source>
</evidence>
<reference key="1">
    <citation type="submission" date="2008-10" db="EMBL/GenBank/DDBJ databases">
        <title>The complete genome sequence of Helicobacter pylori strain P12.</title>
        <authorList>
            <person name="Fischer W."/>
            <person name="Windhager L."/>
            <person name="Karnholz A."/>
            <person name="Zeiller M."/>
            <person name="Zimmer R."/>
            <person name="Haas R."/>
        </authorList>
    </citation>
    <scope>NUCLEOTIDE SEQUENCE [LARGE SCALE GENOMIC DNA]</scope>
    <source>
        <strain>P12</strain>
    </source>
</reference>
<keyword id="KW-0328">Glycosyltransferase</keyword>
<keyword id="KW-0479">Metal-binding</keyword>
<keyword id="KW-0671">Queuosine biosynthesis</keyword>
<keyword id="KW-0808">Transferase</keyword>
<keyword id="KW-0819">tRNA processing</keyword>
<keyword id="KW-0862">Zinc</keyword>
<dbReference type="EC" id="2.4.2.29" evidence="1"/>
<dbReference type="EMBL" id="CP001217">
    <property type="protein sequence ID" value="ACJ07438.1"/>
    <property type="molecule type" value="Genomic_DNA"/>
</dbReference>
<dbReference type="SMR" id="B6JKL0"/>
<dbReference type="KEGG" id="hpp:HPP12_0280"/>
<dbReference type="HOGENOM" id="CLU_022060_0_1_7"/>
<dbReference type="UniPathway" id="UPA00392"/>
<dbReference type="Proteomes" id="UP000008198">
    <property type="component" value="Chromosome"/>
</dbReference>
<dbReference type="GO" id="GO:0005829">
    <property type="term" value="C:cytosol"/>
    <property type="evidence" value="ECO:0007669"/>
    <property type="project" value="TreeGrafter"/>
</dbReference>
<dbReference type="GO" id="GO:0046872">
    <property type="term" value="F:metal ion binding"/>
    <property type="evidence" value="ECO:0007669"/>
    <property type="project" value="UniProtKB-KW"/>
</dbReference>
<dbReference type="GO" id="GO:0008479">
    <property type="term" value="F:tRNA-guanosine(34) queuine transglycosylase activity"/>
    <property type="evidence" value="ECO:0007669"/>
    <property type="project" value="UniProtKB-UniRule"/>
</dbReference>
<dbReference type="GO" id="GO:0008616">
    <property type="term" value="P:queuosine biosynthetic process"/>
    <property type="evidence" value="ECO:0007669"/>
    <property type="project" value="UniProtKB-UniRule"/>
</dbReference>
<dbReference type="GO" id="GO:0101030">
    <property type="term" value="P:tRNA-guanine transglycosylation"/>
    <property type="evidence" value="ECO:0007669"/>
    <property type="project" value="InterPro"/>
</dbReference>
<dbReference type="Gene3D" id="3.20.20.105">
    <property type="entry name" value="Queuine tRNA-ribosyltransferase-like"/>
    <property type="match status" value="1"/>
</dbReference>
<dbReference type="HAMAP" id="MF_00168">
    <property type="entry name" value="Q_tRNA_Tgt"/>
    <property type="match status" value="1"/>
</dbReference>
<dbReference type="InterPro" id="IPR004803">
    <property type="entry name" value="TGT"/>
</dbReference>
<dbReference type="InterPro" id="IPR036511">
    <property type="entry name" value="TGT-like_sf"/>
</dbReference>
<dbReference type="InterPro" id="IPR002616">
    <property type="entry name" value="tRNA_ribo_trans-like"/>
</dbReference>
<dbReference type="NCBIfam" id="TIGR00430">
    <property type="entry name" value="Q_tRNA_tgt"/>
    <property type="match status" value="1"/>
</dbReference>
<dbReference type="NCBIfam" id="TIGR00449">
    <property type="entry name" value="tgt_general"/>
    <property type="match status" value="1"/>
</dbReference>
<dbReference type="PANTHER" id="PTHR43530">
    <property type="entry name" value="QUEUINE TRNA-RIBOSYLTRANSFERASE CATALYTIC SUBUNIT 1"/>
    <property type="match status" value="1"/>
</dbReference>
<dbReference type="PANTHER" id="PTHR43530:SF1">
    <property type="entry name" value="QUEUINE TRNA-RIBOSYLTRANSFERASE CATALYTIC SUBUNIT 1"/>
    <property type="match status" value="1"/>
</dbReference>
<dbReference type="Pfam" id="PF01702">
    <property type="entry name" value="TGT"/>
    <property type="match status" value="1"/>
</dbReference>
<dbReference type="SUPFAM" id="SSF51713">
    <property type="entry name" value="tRNA-guanine transglycosylase"/>
    <property type="match status" value="1"/>
</dbReference>
<sequence>MDFQLQATDKHARAGLLNLAHSQVATPVFMPVGTQGCIKSLDATDAQEILGAKLILANTYHMYLRPGEKAVGQLGGLHRFAQFQGSFLTDSGGFQAFSLSNNVKLQEDGIVFKSHIDGSKHLFTPIKVLDIQYSLNSDIMMVLDDLVGLPAPLKRLEESIKRSAKWANLSLEYHKEKNRPNNNLFAIIQGGTHLKMRSLSVGLTHKGFDGYAIGGLAVGESVDEMLETIAHTAPLLPKDKPRYLMGVGTPENILDAISLGVDMFDCVMPTRNARNATLFTHFGKISIKNAPYKLDDTPIEENCACYTCKRYSKAYLHHLFRAKELTYARLASLHNLHFYLELVKNARNAILEKRFLSFKKEFLEKYHSCSH</sequence>
<comment type="function">
    <text evidence="1">Catalyzes the base-exchange of a guanine (G) residue with the queuine precursor 7-aminomethyl-7-deazaguanine (PreQ1) at position 34 (anticodon wobble position) in tRNAs with GU(N) anticodons (tRNA-Asp, -Asn, -His and -Tyr). Catalysis occurs through a double-displacement mechanism. The nucleophile active site attacks the C1' of nucleotide 34 to detach the guanine base from the RNA, forming a covalent enzyme-RNA intermediate. The proton acceptor active site deprotonates the incoming PreQ1, allowing a nucleophilic attack on the C1' of the ribose to form the product. After dissociation, two additional enzymatic reactions on the tRNA convert PreQ1 to queuine (Q), resulting in the hypermodified nucleoside queuosine (7-(((4,5-cis-dihydroxy-2-cyclopenten-1-yl)amino)methyl)-7-deazaguanosine).</text>
</comment>
<comment type="catalytic activity">
    <reaction evidence="1">
        <text>7-aminomethyl-7-carbaguanine + guanosine(34) in tRNA = 7-aminomethyl-7-carbaguanosine(34) in tRNA + guanine</text>
        <dbReference type="Rhea" id="RHEA:24104"/>
        <dbReference type="Rhea" id="RHEA-COMP:10341"/>
        <dbReference type="Rhea" id="RHEA-COMP:10342"/>
        <dbReference type="ChEBI" id="CHEBI:16235"/>
        <dbReference type="ChEBI" id="CHEBI:58703"/>
        <dbReference type="ChEBI" id="CHEBI:74269"/>
        <dbReference type="ChEBI" id="CHEBI:82833"/>
        <dbReference type="EC" id="2.4.2.29"/>
    </reaction>
</comment>
<comment type="cofactor">
    <cofactor evidence="1">
        <name>Zn(2+)</name>
        <dbReference type="ChEBI" id="CHEBI:29105"/>
    </cofactor>
    <text evidence="1">Binds 1 zinc ion per subunit.</text>
</comment>
<comment type="pathway">
    <text evidence="1">tRNA modification; tRNA-queuosine biosynthesis.</text>
</comment>
<comment type="subunit">
    <text evidence="1">Homodimer. Within each dimer, one monomer is responsible for RNA recognition and catalysis, while the other monomer binds to the replacement base PreQ1.</text>
</comment>
<comment type="similarity">
    <text evidence="1">Belongs to the queuine tRNA-ribosyltransferase family.</text>
</comment>
<gene>
    <name evidence="1" type="primary">tgt</name>
    <name type="ordered locus">HPP12_0280</name>
</gene>
<feature type="chain" id="PRO_1000097546" description="Queuine tRNA-ribosyltransferase">
    <location>
        <begin position="1"/>
        <end position="371"/>
    </location>
</feature>
<feature type="region of interest" description="RNA binding" evidence="1">
    <location>
        <begin position="246"/>
        <end position="252"/>
    </location>
</feature>
<feature type="region of interest" description="RNA binding; important for wobble base 34 recognition" evidence="1">
    <location>
        <begin position="270"/>
        <end position="274"/>
    </location>
</feature>
<feature type="active site" description="Proton acceptor" evidence="1">
    <location>
        <position position="90"/>
    </location>
</feature>
<feature type="active site" description="Nucleophile" evidence="1">
    <location>
        <position position="265"/>
    </location>
</feature>
<feature type="binding site" evidence="1">
    <location>
        <begin position="90"/>
        <end position="94"/>
    </location>
    <ligand>
        <name>substrate</name>
    </ligand>
</feature>
<feature type="binding site" evidence="1">
    <location>
        <position position="144"/>
    </location>
    <ligand>
        <name>substrate</name>
    </ligand>
</feature>
<feature type="binding site" evidence="1">
    <location>
        <position position="189"/>
    </location>
    <ligand>
        <name>substrate</name>
    </ligand>
</feature>
<feature type="binding site" evidence="1">
    <location>
        <position position="215"/>
    </location>
    <ligand>
        <name>substrate</name>
    </ligand>
</feature>
<feature type="binding site" evidence="1">
    <location>
        <position position="303"/>
    </location>
    <ligand>
        <name>Zn(2+)</name>
        <dbReference type="ChEBI" id="CHEBI:29105"/>
    </ligand>
</feature>
<feature type="binding site" evidence="1">
    <location>
        <position position="305"/>
    </location>
    <ligand>
        <name>Zn(2+)</name>
        <dbReference type="ChEBI" id="CHEBI:29105"/>
    </ligand>
</feature>
<feature type="binding site" evidence="1">
    <location>
        <position position="308"/>
    </location>
    <ligand>
        <name>Zn(2+)</name>
        <dbReference type="ChEBI" id="CHEBI:29105"/>
    </ligand>
</feature>
<feature type="binding site" evidence="1">
    <location>
        <position position="334"/>
    </location>
    <ligand>
        <name>Zn(2+)</name>
        <dbReference type="ChEBI" id="CHEBI:29105"/>
    </ligand>
</feature>
<organism>
    <name type="scientific">Helicobacter pylori (strain P12)</name>
    <dbReference type="NCBI Taxonomy" id="570508"/>
    <lineage>
        <taxon>Bacteria</taxon>
        <taxon>Pseudomonadati</taxon>
        <taxon>Campylobacterota</taxon>
        <taxon>Epsilonproteobacteria</taxon>
        <taxon>Campylobacterales</taxon>
        <taxon>Helicobacteraceae</taxon>
        <taxon>Helicobacter</taxon>
    </lineage>
</organism>
<name>TGT_HELP2</name>
<proteinExistence type="inferred from homology"/>
<protein>
    <recommendedName>
        <fullName evidence="1">Queuine tRNA-ribosyltransferase</fullName>
        <ecNumber evidence="1">2.4.2.29</ecNumber>
    </recommendedName>
    <alternativeName>
        <fullName evidence="1">Guanine insertion enzyme</fullName>
    </alternativeName>
    <alternativeName>
        <fullName evidence="1">tRNA-guanine transglycosylase</fullName>
    </alternativeName>
</protein>
<accession>B6JKL0</accession>